<gene>
    <name type="primary">for3</name>
    <name type="ORF">SPCC895.05</name>
</gene>
<accession>O94532</accession>
<protein>
    <recommendedName>
        <fullName>Formin-3</fullName>
    </recommendedName>
</protein>
<name>FOR3_SCHPO</name>
<feature type="chain" id="PRO_0000194904" description="Formin-3">
    <location>
        <begin position="1"/>
        <end position="1461"/>
    </location>
</feature>
<feature type="domain" description="GBD/FH3" evidence="2">
    <location>
        <begin position="92"/>
        <end position="508"/>
    </location>
</feature>
<feature type="domain" description="FH2" evidence="3">
    <location>
        <begin position="845"/>
        <end position="1257"/>
    </location>
</feature>
<feature type="region of interest" description="Disordered" evidence="4">
    <location>
        <begin position="1"/>
        <end position="67"/>
    </location>
</feature>
<feature type="region of interest" description="Interaction with tea4">
    <location>
        <begin position="137"/>
        <end position="515"/>
    </location>
</feature>
<feature type="region of interest" description="Disordered" evidence="4">
    <location>
        <begin position="431"/>
        <end position="457"/>
    </location>
</feature>
<feature type="region of interest" description="Disordered" evidence="4">
    <location>
        <begin position="683"/>
        <end position="811"/>
    </location>
</feature>
<feature type="region of interest" description="Disordered" evidence="4">
    <location>
        <begin position="1268"/>
        <end position="1337"/>
    </location>
</feature>
<feature type="region of interest" description="Disordered" evidence="4">
    <location>
        <begin position="1416"/>
        <end position="1461"/>
    </location>
</feature>
<feature type="coiled-coil region" evidence="1">
    <location>
        <begin position="540"/>
        <end position="639"/>
    </location>
</feature>
<feature type="compositionally biased region" description="Low complexity" evidence="4">
    <location>
        <begin position="12"/>
        <end position="28"/>
    </location>
</feature>
<feature type="compositionally biased region" description="Polar residues" evidence="4">
    <location>
        <begin position="29"/>
        <end position="53"/>
    </location>
</feature>
<feature type="compositionally biased region" description="Polar residues" evidence="4">
    <location>
        <begin position="438"/>
        <end position="457"/>
    </location>
</feature>
<feature type="compositionally biased region" description="Low complexity" evidence="4">
    <location>
        <begin position="700"/>
        <end position="718"/>
    </location>
</feature>
<feature type="compositionally biased region" description="Pro residues" evidence="4">
    <location>
        <begin position="731"/>
        <end position="784"/>
    </location>
</feature>
<feature type="compositionally biased region" description="Basic and acidic residues" evidence="4">
    <location>
        <begin position="801"/>
        <end position="811"/>
    </location>
</feature>
<feature type="compositionally biased region" description="Basic and acidic residues" evidence="4">
    <location>
        <begin position="1273"/>
        <end position="1315"/>
    </location>
</feature>
<feature type="compositionally biased region" description="Basic and acidic residues" evidence="4">
    <location>
        <begin position="1325"/>
        <end position="1337"/>
    </location>
</feature>
<feature type="compositionally biased region" description="Polar residues" evidence="4">
    <location>
        <begin position="1445"/>
        <end position="1454"/>
    </location>
</feature>
<organism>
    <name type="scientific">Schizosaccharomyces pombe (strain 972 / ATCC 24843)</name>
    <name type="common">Fission yeast</name>
    <dbReference type="NCBI Taxonomy" id="284812"/>
    <lineage>
        <taxon>Eukaryota</taxon>
        <taxon>Fungi</taxon>
        <taxon>Dikarya</taxon>
        <taxon>Ascomycota</taxon>
        <taxon>Taphrinomycotina</taxon>
        <taxon>Schizosaccharomycetes</taxon>
        <taxon>Schizosaccharomycetales</taxon>
        <taxon>Schizosaccharomycetaceae</taxon>
        <taxon>Schizosaccharomyces</taxon>
    </lineage>
</organism>
<dbReference type="EMBL" id="CU329672">
    <property type="protein sequence ID" value="CAA22841.1"/>
    <property type="molecule type" value="Genomic_DNA"/>
</dbReference>
<dbReference type="PIR" id="T41643">
    <property type="entry name" value="T41643"/>
</dbReference>
<dbReference type="RefSeq" id="NP_588046.1">
    <property type="nucleotide sequence ID" value="NM_001023038.2"/>
</dbReference>
<dbReference type="SMR" id="O94532"/>
<dbReference type="BioGRID" id="276050">
    <property type="interactions" value="64"/>
</dbReference>
<dbReference type="FunCoup" id="O94532">
    <property type="interactions" value="79"/>
</dbReference>
<dbReference type="IntAct" id="O94532">
    <property type="interactions" value="2"/>
</dbReference>
<dbReference type="STRING" id="284812.O94532"/>
<dbReference type="iPTMnet" id="O94532"/>
<dbReference type="PaxDb" id="4896-SPCC895.05.1"/>
<dbReference type="EnsemblFungi" id="SPCC895.05.1">
    <property type="protein sequence ID" value="SPCC895.05.1:pep"/>
    <property type="gene ID" value="SPCC895.05"/>
</dbReference>
<dbReference type="GeneID" id="2539487"/>
<dbReference type="KEGG" id="spo:2539487"/>
<dbReference type="PomBase" id="SPCC895.05">
    <property type="gene designation" value="for3"/>
</dbReference>
<dbReference type="VEuPathDB" id="FungiDB:SPCC895.05"/>
<dbReference type="eggNOG" id="KOG1922">
    <property type="taxonomic scope" value="Eukaryota"/>
</dbReference>
<dbReference type="HOGENOM" id="CLU_254054_0_0_1"/>
<dbReference type="InParanoid" id="O94532"/>
<dbReference type="OMA" id="GPRDPMQ"/>
<dbReference type="PRO" id="PR:O94532"/>
<dbReference type="Proteomes" id="UP000002485">
    <property type="component" value="Chromosome III"/>
</dbReference>
<dbReference type="GO" id="GO:0051285">
    <property type="term" value="C:cell cortex of cell tip"/>
    <property type="evidence" value="ECO:0000314"/>
    <property type="project" value="PomBase"/>
</dbReference>
<dbReference type="GO" id="GO:1902716">
    <property type="term" value="C:cell cortex of growing cell tip"/>
    <property type="evidence" value="ECO:0000314"/>
    <property type="project" value="PomBase"/>
</dbReference>
<dbReference type="GO" id="GO:0032153">
    <property type="term" value="C:cell division site"/>
    <property type="evidence" value="ECO:0000314"/>
    <property type="project" value="PomBase"/>
</dbReference>
<dbReference type="GO" id="GO:0051286">
    <property type="term" value="C:cell tip"/>
    <property type="evidence" value="ECO:0000314"/>
    <property type="project" value="PomBase"/>
</dbReference>
<dbReference type="GO" id="GO:0005737">
    <property type="term" value="C:cytoplasm"/>
    <property type="evidence" value="ECO:0007005"/>
    <property type="project" value="PomBase"/>
</dbReference>
<dbReference type="GO" id="GO:0043332">
    <property type="term" value="C:mating projection tip"/>
    <property type="evidence" value="ECO:0000314"/>
    <property type="project" value="PomBase"/>
</dbReference>
<dbReference type="GO" id="GO:0031097">
    <property type="term" value="C:medial cortex"/>
    <property type="evidence" value="ECO:0000314"/>
    <property type="project" value="PomBase"/>
</dbReference>
<dbReference type="GO" id="GO:0036391">
    <property type="term" value="C:medial cortex septin ring"/>
    <property type="evidence" value="ECO:0000314"/>
    <property type="project" value="PomBase"/>
</dbReference>
<dbReference type="GO" id="GO:0110085">
    <property type="term" value="C:mitotic actomyosin contractile ring"/>
    <property type="evidence" value="ECO:0000314"/>
    <property type="project" value="PomBase"/>
</dbReference>
<dbReference type="GO" id="GO:0051015">
    <property type="term" value="F:actin filament binding"/>
    <property type="evidence" value="ECO:0000318"/>
    <property type="project" value="GO_Central"/>
</dbReference>
<dbReference type="GO" id="GO:0031267">
    <property type="term" value="F:small GTPase binding"/>
    <property type="evidence" value="ECO:0007669"/>
    <property type="project" value="InterPro"/>
</dbReference>
<dbReference type="GO" id="GO:0030036">
    <property type="term" value="P:actin cytoskeleton organization"/>
    <property type="evidence" value="ECO:0000315"/>
    <property type="project" value="PomBase"/>
</dbReference>
<dbReference type="GO" id="GO:0051017">
    <property type="term" value="P:actin filament bundle assembly"/>
    <property type="evidence" value="ECO:0000315"/>
    <property type="project" value="PomBase"/>
</dbReference>
<dbReference type="GO" id="GO:0061572">
    <property type="term" value="P:actin filament bundle organization"/>
    <property type="evidence" value="ECO:0000315"/>
    <property type="project" value="PomBase"/>
</dbReference>
<dbReference type="GO" id="GO:0061245">
    <property type="term" value="P:establishment or maintenance of bipolar cell polarity"/>
    <property type="evidence" value="ECO:0000315"/>
    <property type="project" value="PomBase"/>
</dbReference>
<dbReference type="GO" id="GO:1903475">
    <property type="term" value="P:mitotic actomyosin contractile ring assembly"/>
    <property type="evidence" value="ECO:0000316"/>
    <property type="project" value="PomBase"/>
</dbReference>
<dbReference type="GO" id="GO:1904498">
    <property type="term" value="P:protein localization to mitotic actomyosin contractile ring"/>
    <property type="evidence" value="ECO:0000315"/>
    <property type="project" value="PomBase"/>
</dbReference>
<dbReference type="GO" id="GO:0008360">
    <property type="term" value="P:regulation of cell shape"/>
    <property type="evidence" value="ECO:0007669"/>
    <property type="project" value="UniProtKB-KW"/>
</dbReference>
<dbReference type="FunFam" id="1.20.58.2220:FF:000006">
    <property type="entry name" value="Cytokinesis protein sepA"/>
    <property type="match status" value="1"/>
</dbReference>
<dbReference type="Gene3D" id="1.20.58.2220">
    <property type="entry name" value="Formin, FH2 domain"/>
    <property type="match status" value="1"/>
</dbReference>
<dbReference type="Gene3D" id="1.25.10.10">
    <property type="entry name" value="Leucine-rich Repeat Variant"/>
    <property type="match status" value="1"/>
</dbReference>
<dbReference type="InterPro" id="IPR051661">
    <property type="entry name" value="Actin_filament_regulator"/>
</dbReference>
<dbReference type="InterPro" id="IPR011989">
    <property type="entry name" value="ARM-like"/>
</dbReference>
<dbReference type="InterPro" id="IPR016024">
    <property type="entry name" value="ARM-type_fold"/>
</dbReference>
<dbReference type="InterPro" id="IPR015425">
    <property type="entry name" value="FH2_Formin"/>
</dbReference>
<dbReference type="InterPro" id="IPR042201">
    <property type="entry name" value="FH2_Formin_sf"/>
</dbReference>
<dbReference type="InterPro" id="IPR010472">
    <property type="entry name" value="FH3_dom"/>
</dbReference>
<dbReference type="InterPro" id="IPR014768">
    <property type="entry name" value="GBD/FH3_dom"/>
</dbReference>
<dbReference type="InterPro" id="IPR010473">
    <property type="entry name" value="GTPase-bd"/>
</dbReference>
<dbReference type="PANTHER" id="PTHR47102:SF3">
    <property type="entry name" value="FORMIN-3"/>
    <property type="match status" value="1"/>
</dbReference>
<dbReference type="PANTHER" id="PTHR47102">
    <property type="entry name" value="PROTEIN BNI1"/>
    <property type="match status" value="1"/>
</dbReference>
<dbReference type="Pfam" id="PF06367">
    <property type="entry name" value="Drf_FH3"/>
    <property type="match status" value="1"/>
</dbReference>
<dbReference type="Pfam" id="PF02181">
    <property type="entry name" value="FH2"/>
    <property type="match status" value="1"/>
</dbReference>
<dbReference type="SMART" id="SM01139">
    <property type="entry name" value="Drf_FH3"/>
    <property type="match status" value="1"/>
</dbReference>
<dbReference type="SMART" id="SM01140">
    <property type="entry name" value="Drf_GBD"/>
    <property type="match status" value="1"/>
</dbReference>
<dbReference type="SMART" id="SM00498">
    <property type="entry name" value="FH2"/>
    <property type="match status" value="1"/>
</dbReference>
<dbReference type="SUPFAM" id="SSF48371">
    <property type="entry name" value="ARM repeat"/>
    <property type="match status" value="1"/>
</dbReference>
<dbReference type="SUPFAM" id="SSF101447">
    <property type="entry name" value="Formin homology 2 domain (FH2 domain)"/>
    <property type="match status" value="1"/>
</dbReference>
<dbReference type="PROSITE" id="PS51444">
    <property type="entry name" value="FH2"/>
    <property type="match status" value="1"/>
</dbReference>
<dbReference type="PROSITE" id="PS51232">
    <property type="entry name" value="GBD_FH3"/>
    <property type="match status" value="1"/>
</dbReference>
<keyword id="KW-0131">Cell cycle</keyword>
<keyword id="KW-0132">Cell division</keyword>
<keyword id="KW-0133">Cell shape</keyword>
<keyword id="KW-0175">Coiled coil</keyword>
<keyword id="KW-0963">Cytoplasm</keyword>
<keyword id="KW-1185">Reference proteome</keyword>
<comment type="function">
    <text evidence="5 6 7">Involved in controlling polarized cell growth. Required for interphase actin cable formation and microtubule organization.</text>
</comment>
<comment type="subunit">
    <text evidence="6 7 9">Interacts with rax2, rho3 and tea4. Interacts with tea1 in the presence of tea4.</text>
</comment>
<comment type="interaction">
    <interactant intactId="EBI-1102572">
        <id>O94532</id>
    </interactant>
    <interactant intactId="EBI-1099982">
        <id>O60132</id>
        <label>tea4</label>
    </interactant>
    <organismsDiffer>false</organismsDiffer>
    <experiments>5</experiments>
</comment>
<comment type="subcellular location">
    <subcellularLocation>
        <location evidence="5 6 7 8">Cytoplasm</location>
        <location evidence="5 6 7 8">Cell cortex</location>
    </subcellularLocation>
    <subcellularLocation>
        <location evidence="5 6 7 8">Cell tip</location>
    </subcellularLocation>
    <text evidence="5 6 7">Found at the cell cortex and the growing tips of interphase cells. Localized to the septum region during cell division and upon cell division begins to localize to the new end, with some remaining at the older end.</text>
</comment>
<comment type="similarity">
    <text evidence="10">Belongs to the formin homology family.</text>
</comment>
<proteinExistence type="evidence at protein level"/>
<sequence>MASKMPEGSPPTSRSIQSRNSSYSTSSNERIGTPSTISLSENSDLSKLQSTNDFESREDLSLTSDDNNDPEYVMCYNTVYHQKTKINDKLLSETEQLRKIYPLESRVFPKPTIVKEITNERTKRYTFYDDDAPLTNQHTVLDEATYNRILKRIDFFIEKVVEVPPTYHFLSLLNVQLRIQPIWWMDEFAERNGIESLLSALRNLGHYPERASKTPLESQIIQSLFHCLNSENCRRRYQSSAKCSVPGFNALGTIAETVLSKSLNSARMATFLLKFLCNKKGLSYFKAVIRAFEWLVEQKLSKTRFSAWMHSFNDVITGVRVCADSSPQAIVHMDEFEDTDCLIDYLVATLALIRDLCAAPPDLQLRCALRHELLSAGLQKAIDSLLKWRNRHVRDALQLLIKEHNADARRFRSGSDVNNVDRKCVKKQMNYREESHTPHGNTTRKTSTPVSNNRPTTPEQQAVWDVFQRIYTRFTGSEGSKESFIKLLEYFVTEPDNGKIQKSMQLLTHTLEALEGFKTAKADTNVGLTILSQRLLDKLGTAEEIAEYKTKYNGAMLENKHLKEQVESMLSQLNVGPRDPMQFLKKQLDELKAELNLRDNLLASMQREFETRYRAQIQAYNKLQSQMEHVQNSNEQHLQPGLLNKVSKSFDSVHRRNLSQDSLDAMTEQFSYHVEPNILSGSGIPVRVHTPSKTEDLDESFSGSEISSSPSPLLPDVSDTVEEQQKLLLKSPPPPPPAVIVPTPAPAPIPVPPPAPIMGGPPPPPPPPGVAGAGPPPPPPPPPAVSAGGSRYYAPAPQAEPEPKIDETSLTEEQKIQLEEARKQRKAADDAARAAIEKYTSIPSLRDLHKPTRPLKRVHWQRVDPLPGPNVFTKFCLNFDITAKVFIDNGLLDFLDEKFDNTPREDFVAVEISDQRSSLLPDTVEQNMAIILRSVSNMPVEDLVQKFLVEPDFLPASILYFDRASLASTNAYTDPFIPYSTDYTKKNPKEPTADVNSLSYFEKFFVLFVVNLRHYFQERMKALKFRSTLFGDLEILEVRMKEVIDTSDSIMEDKNFAEFFQVLLIIGNYFNEPYDRASAFSLYMIYRLETLRDSSSALTLMHYFDEIIRTRFPELLQAESTFKKIQSVSGYNIDAMVAGVDGAYDEFCDFQTSLKDGALSKCDQHHPDDKAYDILSEWLPEAKERIRNIKKLKTDMLTKLENTVKYLCEYDSIDKVRNSFFKNLNSFYEMYSIAKAENEERFEKEKRRIMSEDRDKLIRGRQKTSIVAKYRNKRELPEDSDDKQDTASKDKNSLETIDEKMEDASKIEGDAKTGDDNEMEDLDKMEDLEKPDYAEEKDPYITVMSELRSRIQNVPKRTVTVYSDEGVATLEPGAQGDDVVDKAKMILEKMEGHSQLLTSSANPDEEVLRAKLKAAERLQKPAIPRTRRKGHTEPKSAKSLLAELTNGSNASNLVENDRQKQ</sequence>
<evidence type="ECO:0000255" key="1"/>
<evidence type="ECO:0000255" key="2">
    <source>
        <dbReference type="PROSITE-ProRule" id="PRU00579"/>
    </source>
</evidence>
<evidence type="ECO:0000255" key="3">
    <source>
        <dbReference type="PROSITE-ProRule" id="PRU00774"/>
    </source>
</evidence>
<evidence type="ECO:0000256" key="4">
    <source>
        <dbReference type="SAM" id="MobiDB-lite"/>
    </source>
</evidence>
<evidence type="ECO:0000269" key="5">
    <source>
    </source>
</evidence>
<evidence type="ECO:0000269" key="6">
    <source>
    </source>
</evidence>
<evidence type="ECO:0000269" key="7">
    <source>
    </source>
</evidence>
<evidence type="ECO:0000269" key="8">
    <source>
    </source>
</evidence>
<evidence type="ECO:0000269" key="9">
    <source>
    </source>
</evidence>
<evidence type="ECO:0000305" key="10"/>
<reference key="1">
    <citation type="journal article" date="2002" name="Nature">
        <title>The genome sequence of Schizosaccharomyces pombe.</title>
        <authorList>
            <person name="Wood V."/>
            <person name="Gwilliam R."/>
            <person name="Rajandream M.A."/>
            <person name="Lyne M.H."/>
            <person name="Lyne R."/>
            <person name="Stewart A."/>
            <person name="Sgouros J.G."/>
            <person name="Peat N."/>
            <person name="Hayles J."/>
            <person name="Baker S.G."/>
            <person name="Basham D."/>
            <person name="Bowman S."/>
            <person name="Brooks K."/>
            <person name="Brown D."/>
            <person name="Brown S."/>
            <person name="Chillingworth T."/>
            <person name="Churcher C.M."/>
            <person name="Collins M."/>
            <person name="Connor R."/>
            <person name="Cronin A."/>
            <person name="Davis P."/>
            <person name="Feltwell T."/>
            <person name="Fraser A."/>
            <person name="Gentles S."/>
            <person name="Goble A."/>
            <person name="Hamlin N."/>
            <person name="Harris D.E."/>
            <person name="Hidalgo J."/>
            <person name="Hodgson G."/>
            <person name="Holroyd S."/>
            <person name="Hornsby T."/>
            <person name="Howarth S."/>
            <person name="Huckle E.J."/>
            <person name="Hunt S."/>
            <person name="Jagels K."/>
            <person name="James K.D."/>
            <person name="Jones L."/>
            <person name="Jones M."/>
            <person name="Leather S."/>
            <person name="McDonald S."/>
            <person name="McLean J."/>
            <person name="Mooney P."/>
            <person name="Moule S."/>
            <person name="Mungall K.L."/>
            <person name="Murphy L.D."/>
            <person name="Niblett D."/>
            <person name="Odell C."/>
            <person name="Oliver K."/>
            <person name="O'Neil S."/>
            <person name="Pearson D."/>
            <person name="Quail M.A."/>
            <person name="Rabbinowitsch E."/>
            <person name="Rutherford K.M."/>
            <person name="Rutter S."/>
            <person name="Saunders D."/>
            <person name="Seeger K."/>
            <person name="Sharp S."/>
            <person name="Skelton J."/>
            <person name="Simmonds M.N."/>
            <person name="Squares R."/>
            <person name="Squares S."/>
            <person name="Stevens K."/>
            <person name="Taylor K."/>
            <person name="Taylor R.G."/>
            <person name="Tivey A."/>
            <person name="Walsh S.V."/>
            <person name="Warren T."/>
            <person name="Whitehead S."/>
            <person name="Woodward J.R."/>
            <person name="Volckaert G."/>
            <person name="Aert R."/>
            <person name="Robben J."/>
            <person name="Grymonprez B."/>
            <person name="Weltjens I."/>
            <person name="Vanstreels E."/>
            <person name="Rieger M."/>
            <person name="Schaefer M."/>
            <person name="Mueller-Auer S."/>
            <person name="Gabel C."/>
            <person name="Fuchs M."/>
            <person name="Duesterhoeft A."/>
            <person name="Fritzc C."/>
            <person name="Holzer E."/>
            <person name="Moestl D."/>
            <person name="Hilbert H."/>
            <person name="Borzym K."/>
            <person name="Langer I."/>
            <person name="Beck A."/>
            <person name="Lehrach H."/>
            <person name="Reinhardt R."/>
            <person name="Pohl T.M."/>
            <person name="Eger P."/>
            <person name="Zimmermann W."/>
            <person name="Wedler H."/>
            <person name="Wambutt R."/>
            <person name="Purnelle B."/>
            <person name="Goffeau A."/>
            <person name="Cadieu E."/>
            <person name="Dreano S."/>
            <person name="Gloux S."/>
            <person name="Lelaure V."/>
            <person name="Mottier S."/>
            <person name="Galibert F."/>
            <person name="Aves S.J."/>
            <person name="Xiang Z."/>
            <person name="Hunt C."/>
            <person name="Moore K."/>
            <person name="Hurst S.M."/>
            <person name="Lucas M."/>
            <person name="Rochet M."/>
            <person name="Gaillardin C."/>
            <person name="Tallada V.A."/>
            <person name="Garzon A."/>
            <person name="Thode G."/>
            <person name="Daga R.R."/>
            <person name="Cruzado L."/>
            <person name="Jimenez J."/>
            <person name="Sanchez M."/>
            <person name="del Rey F."/>
            <person name="Benito J."/>
            <person name="Dominguez A."/>
            <person name="Revuelta J.L."/>
            <person name="Moreno S."/>
            <person name="Armstrong J."/>
            <person name="Forsburg S.L."/>
            <person name="Cerutti L."/>
            <person name="Lowe T."/>
            <person name="McCombie W.R."/>
            <person name="Paulsen I."/>
            <person name="Potashkin J."/>
            <person name="Shpakovski G.V."/>
            <person name="Ussery D."/>
            <person name="Barrell B.G."/>
            <person name="Nurse P."/>
        </authorList>
    </citation>
    <scope>NUCLEOTIDE SEQUENCE [LARGE SCALE GENOMIC DNA]</scope>
    <source>
        <strain>972 / ATCC 24843</strain>
    </source>
</reference>
<reference key="2">
    <citation type="journal article" date="2001" name="Curr. Biol.">
        <title>Roles of the fission yeast formin for3p in cell polarity, actin cable formation and symmetric cell division.</title>
        <authorList>
            <person name="Feierbach B."/>
            <person name="Chang F."/>
        </authorList>
    </citation>
    <scope>FUNCTION</scope>
    <scope>SUBCELLULAR LOCATION</scope>
</reference>
<reference key="3">
    <citation type="journal article" date="2002" name="J. Cell Sci.">
        <title>The small GTPase Rho3 and the diaphanous/formin For3 function in polarized cell growth in fission yeast.</title>
        <authorList>
            <person name="Nakano K."/>
            <person name="Imai J."/>
            <person name="Arai R."/>
            <person name="Toh-e A."/>
            <person name="Matsui Y."/>
            <person name="Mabuchi I."/>
        </authorList>
    </citation>
    <scope>FUNCTION</scope>
    <scope>INTERACTION WITH RHO3</scope>
    <scope>SUBCELLULAR LOCATION</scope>
</reference>
<reference key="4">
    <citation type="journal article" date="2005" name="Dev. Cell">
        <title>Tea4p links microtubule plus ends with the formin for3p in the establishment of cell polarity.</title>
        <authorList>
            <person name="Martin S.G."/>
            <person name="McDonald W.H."/>
            <person name="Yates J.R. III"/>
            <person name="Chang F."/>
        </authorList>
    </citation>
    <scope>FUNCTION</scope>
    <scope>INTERACTION WITH TEA1 AND TEA4</scope>
    <scope>SUBCELLULAR LOCATION</scope>
</reference>
<reference key="5">
    <citation type="journal article" date="2006" name="Mol. Cells">
        <title>Function of rax2p in the polarized growth of fission yeast.</title>
        <authorList>
            <person name="Choi E."/>
            <person name="Lee K."/>
            <person name="Song K."/>
        </authorList>
    </citation>
    <scope>INTERACTION WITH RAX2</scope>
</reference>
<reference key="6">
    <citation type="journal article" date="2006" name="Nat. Biotechnol.">
        <title>ORFeome cloning and global analysis of protein localization in the fission yeast Schizosaccharomyces pombe.</title>
        <authorList>
            <person name="Matsuyama A."/>
            <person name="Arai R."/>
            <person name="Yashiroda Y."/>
            <person name="Shirai A."/>
            <person name="Kamata A."/>
            <person name="Sekido S."/>
            <person name="Kobayashi Y."/>
            <person name="Hashimoto A."/>
            <person name="Hamamoto M."/>
            <person name="Hiraoka Y."/>
            <person name="Horinouchi S."/>
            <person name="Yoshida M."/>
        </authorList>
    </citation>
    <scope>SUBCELLULAR LOCATION [LARGE SCALE ANALYSIS]</scope>
</reference>